<reference key="1">
    <citation type="journal article" date="2004" name="Proc. Natl. Acad. Sci. U.S.A.">
        <title>Insights into the evolution of Yersinia pestis through whole-genome comparison with Yersinia pseudotuberculosis.</title>
        <authorList>
            <person name="Chain P.S.G."/>
            <person name="Carniel E."/>
            <person name="Larimer F.W."/>
            <person name="Lamerdin J."/>
            <person name="Stoutland P.O."/>
            <person name="Regala W.M."/>
            <person name="Georgescu A.M."/>
            <person name="Vergez L.M."/>
            <person name="Land M.L."/>
            <person name="Motin V.L."/>
            <person name="Brubaker R.R."/>
            <person name="Fowler J."/>
            <person name="Hinnebusch J."/>
            <person name="Marceau M."/>
            <person name="Medigue C."/>
            <person name="Simonet M."/>
            <person name="Chenal-Francisque V."/>
            <person name="Souza B."/>
            <person name="Dacheux D."/>
            <person name="Elliott J.M."/>
            <person name="Derbise A."/>
            <person name="Hauser L.J."/>
            <person name="Garcia E."/>
        </authorList>
    </citation>
    <scope>NUCLEOTIDE SEQUENCE [LARGE SCALE GENOMIC DNA]</scope>
    <source>
        <strain>IP32953</strain>
    </source>
</reference>
<comment type="function">
    <text evidence="1">Peptidoglycan polymerase that catalyzes glycan chain elongation from lipid-linked precursors.</text>
</comment>
<comment type="catalytic activity">
    <reaction evidence="1">
        <text>[GlcNAc-(1-&gt;4)-Mur2Ac(oyl-L-Ala-gamma-D-Glu-L-Lys-D-Ala-D-Ala)](n)-di-trans,octa-cis-undecaprenyl diphosphate + beta-D-GlcNAc-(1-&gt;4)-Mur2Ac(oyl-L-Ala-gamma-D-Glu-L-Lys-D-Ala-D-Ala)-di-trans,octa-cis-undecaprenyl diphosphate = [GlcNAc-(1-&gt;4)-Mur2Ac(oyl-L-Ala-gamma-D-Glu-L-Lys-D-Ala-D-Ala)](n+1)-di-trans,octa-cis-undecaprenyl diphosphate + di-trans,octa-cis-undecaprenyl diphosphate + H(+)</text>
        <dbReference type="Rhea" id="RHEA:23708"/>
        <dbReference type="Rhea" id="RHEA-COMP:9602"/>
        <dbReference type="Rhea" id="RHEA-COMP:9603"/>
        <dbReference type="ChEBI" id="CHEBI:15378"/>
        <dbReference type="ChEBI" id="CHEBI:58405"/>
        <dbReference type="ChEBI" id="CHEBI:60033"/>
        <dbReference type="ChEBI" id="CHEBI:78435"/>
        <dbReference type="EC" id="2.4.99.28"/>
    </reaction>
</comment>
<comment type="pathway">
    <text evidence="1">Cell wall biogenesis; peptidoglycan biosynthesis.</text>
</comment>
<comment type="subcellular location">
    <subcellularLocation>
        <location evidence="1">Cell inner membrane</location>
        <topology evidence="1">Single-pass membrane protein</topology>
    </subcellularLocation>
</comment>
<comment type="similarity">
    <text evidence="1">Belongs to the glycosyltransferase 51 family.</text>
</comment>
<evidence type="ECO:0000255" key="1">
    <source>
        <dbReference type="HAMAP-Rule" id="MF_00766"/>
    </source>
</evidence>
<feature type="chain" id="PRO_0000257702" description="Biosynthetic peptidoglycan transglycosylase">
    <location>
        <begin position="1"/>
        <end position="241"/>
    </location>
</feature>
<feature type="transmembrane region" description="Helical" evidence="1">
    <location>
        <begin position="18"/>
        <end position="38"/>
    </location>
</feature>
<organism>
    <name type="scientific">Yersinia pseudotuberculosis serotype I (strain IP32953)</name>
    <dbReference type="NCBI Taxonomy" id="273123"/>
    <lineage>
        <taxon>Bacteria</taxon>
        <taxon>Pseudomonadati</taxon>
        <taxon>Pseudomonadota</taxon>
        <taxon>Gammaproteobacteria</taxon>
        <taxon>Enterobacterales</taxon>
        <taxon>Yersiniaceae</taxon>
        <taxon>Yersinia</taxon>
    </lineage>
</organism>
<name>MTGA_YERPS</name>
<sequence>MISVRRGLSQLWYWGKRGVIGIIALWMAGILIFAFLPVPFSMVMIERQLGAWLTGDFAYVAHSDWVPMDEISPYMALAVMAAEDQKFPDHWGFDVGAIESALSHNQRNQKRIRGASTLSQQTAKNVFLWDGRSWVRKGLEVGLTAGIELIWTKRRILTVYLNIAEFGNGIFGVEAAARHFFNKPASKLSASEAALLAAVLPNPLRFKVNAPSGYVISRQQWILRQMHQLGGKTFLQENTLD</sequence>
<gene>
    <name evidence="1" type="primary">mtgA</name>
    <name type="ordered locus">YPTB3497</name>
</gene>
<dbReference type="EC" id="2.4.99.28" evidence="1"/>
<dbReference type="EMBL" id="BX936398">
    <property type="protein sequence ID" value="CAH22735.1"/>
    <property type="molecule type" value="Genomic_DNA"/>
</dbReference>
<dbReference type="RefSeq" id="WP_011193141.1">
    <property type="nucleotide sequence ID" value="NC_006155.1"/>
</dbReference>
<dbReference type="SMR" id="Q3V7N9"/>
<dbReference type="CAZy" id="GT51">
    <property type="family name" value="Glycosyltransferase Family 51"/>
</dbReference>
<dbReference type="GeneID" id="49784516"/>
<dbReference type="KEGG" id="ypo:BZ17_3105"/>
<dbReference type="KEGG" id="yps:YPTB3497"/>
<dbReference type="PATRIC" id="fig|273123.14.peg.3253"/>
<dbReference type="UniPathway" id="UPA00219"/>
<dbReference type="Proteomes" id="UP000001011">
    <property type="component" value="Chromosome"/>
</dbReference>
<dbReference type="GO" id="GO:0009274">
    <property type="term" value="C:peptidoglycan-based cell wall"/>
    <property type="evidence" value="ECO:0007669"/>
    <property type="project" value="InterPro"/>
</dbReference>
<dbReference type="GO" id="GO:0005886">
    <property type="term" value="C:plasma membrane"/>
    <property type="evidence" value="ECO:0007669"/>
    <property type="project" value="UniProtKB-SubCell"/>
</dbReference>
<dbReference type="GO" id="GO:0016763">
    <property type="term" value="F:pentosyltransferase activity"/>
    <property type="evidence" value="ECO:0007669"/>
    <property type="project" value="InterPro"/>
</dbReference>
<dbReference type="GO" id="GO:0008955">
    <property type="term" value="F:peptidoglycan glycosyltransferase activity"/>
    <property type="evidence" value="ECO:0007669"/>
    <property type="project" value="UniProtKB-UniRule"/>
</dbReference>
<dbReference type="GO" id="GO:0071555">
    <property type="term" value="P:cell wall organization"/>
    <property type="evidence" value="ECO:0007669"/>
    <property type="project" value="UniProtKB-KW"/>
</dbReference>
<dbReference type="GO" id="GO:0009252">
    <property type="term" value="P:peptidoglycan biosynthetic process"/>
    <property type="evidence" value="ECO:0007669"/>
    <property type="project" value="UniProtKB-UniRule"/>
</dbReference>
<dbReference type="GO" id="GO:0008360">
    <property type="term" value="P:regulation of cell shape"/>
    <property type="evidence" value="ECO:0007669"/>
    <property type="project" value="UniProtKB-KW"/>
</dbReference>
<dbReference type="Gene3D" id="1.10.3810.10">
    <property type="entry name" value="Biosynthetic peptidoglycan transglycosylase-like"/>
    <property type="match status" value="1"/>
</dbReference>
<dbReference type="HAMAP" id="MF_00766">
    <property type="entry name" value="PGT_MtgA"/>
    <property type="match status" value="1"/>
</dbReference>
<dbReference type="InterPro" id="IPR001264">
    <property type="entry name" value="Glyco_trans_51"/>
</dbReference>
<dbReference type="InterPro" id="IPR023346">
    <property type="entry name" value="Lysozyme-like_dom_sf"/>
</dbReference>
<dbReference type="InterPro" id="IPR036950">
    <property type="entry name" value="PBP_transglycosylase"/>
</dbReference>
<dbReference type="InterPro" id="IPR011812">
    <property type="entry name" value="Pep_trsgly"/>
</dbReference>
<dbReference type="NCBIfam" id="TIGR02070">
    <property type="entry name" value="mono_pep_trsgly"/>
    <property type="match status" value="1"/>
</dbReference>
<dbReference type="PANTHER" id="PTHR30400:SF0">
    <property type="entry name" value="BIOSYNTHETIC PEPTIDOGLYCAN TRANSGLYCOSYLASE"/>
    <property type="match status" value="1"/>
</dbReference>
<dbReference type="PANTHER" id="PTHR30400">
    <property type="entry name" value="MONOFUNCTIONAL BIOSYNTHETIC PEPTIDOGLYCAN TRANSGLYCOSYLASE"/>
    <property type="match status" value="1"/>
</dbReference>
<dbReference type="Pfam" id="PF00912">
    <property type="entry name" value="Transgly"/>
    <property type="match status" value="1"/>
</dbReference>
<dbReference type="SUPFAM" id="SSF53955">
    <property type="entry name" value="Lysozyme-like"/>
    <property type="match status" value="1"/>
</dbReference>
<keyword id="KW-0997">Cell inner membrane</keyword>
<keyword id="KW-1003">Cell membrane</keyword>
<keyword id="KW-0133">Cell shape</keyword>
<keyword id="KW-0961">Cell wall biogenesis/degradation</keyword>
<keyword id="KW-0328">Glycosyltransferase</keyword>
<keyword id="KW-0472">Membrane</keyword>
<keyword id="KW-0573">Peptidoglycan synthesis</keyword>
<keyword id="KW-0808">Transferase</keyword>
<keyword id="KW-0812">Transmembrane</keyword>
<keyword id="KW-1133">Transmembrane helix</keyword>
<proteinExistence type="inferred from homology"/>
<accession>Q3V7N9</accession>
<protein>
    <recommendedName>
        <fullName evidence="1">Biosynthetic peptidoglycan transglycosylase</fullName>
        <ecNumber evidence="1">2.4.99.28</ecNumber>
    </recommendedName>
    <alternativeName>
        <fullName evidence="1">Glycan polymerase</fullName>
    </alternativeName>
    <alternativeName>
        <fullName evidence="1">Peptidoglycan glycosyltransferase MtgA</fullName>
        <shortName evidence="1">PGT</shortName>
    </alternativeName>
</protein>